<protein>
    <recommendedName>
        <fullName evidence="1">Lipid-A-disaccharide synthase</fullName>
        <ecNumber evidence="1">2.4.1.182</ecNumber>
    </recommendedName>
</protein>
<keyword id="KW-0328">Glycosyltransferase</keyword>
<keyword id="KW-0441">Lipid A biosynthesis</keyword>
<keyword id="KW-0444">Lipid biosynthesis</keyword>
<keyword id="KW-0443">Lipid metabolism</keyword>
<keyword id="KW-1185">Reference proteome</keyword>
<keyword id="KW-0808">Transferase</keyword>
<proteinExistence type="inferred from homology"/>
<sequence>MAFQLTPLRVALVAGEPSGDLLGASLLGGLHARLPASSRYYGIGGPRMSAVEFDAHWPMEKLAVRGYVEALKHIPEILRIRGELKRQLLAEPPDAFVGIDAPDFNFGLEQALRGAGIPTIHFVCPSIWAWRGGRIKKIVKAVDHMLCLFPFEPELLEKAGVAATFVGHPLADEIPLEPDTHGARIALGLPGGGPVIAVLPGSRRSEIELIGPTFFDAMELMQQREPGVRFVVPAATPALRALLQPLVDAHPSLSVTLTEGRAQVAMTAADAILVKSGTVTLEAALLKKPMVISYKVPWLTGQIMRRQGYLPYVGLPNILAGRFVVPELLQHFATPDALADATLTQLRDDANRRALADIFTDMHLALRQNTAQRAAEAVAHVIDSRKPR</sequence>
<accession>Q62JD7</accession>
<comment type="function">
    <text evidence="1">Condensation of UDP-2,3-diacylglucosamine and 2,3-diacylglucosamine-1-phosphate to form lipid A disaccharide, a precursor of lipid A, a phosphorylated glycolipid that anchors the lipopolysaccharide to the outer membrane of the cell.</text>
</comment>
<comment type="catalytic activity">
    <reaction evidence="1">
        <text>a lipid X + a UDP-2-N,3-O-bis[(3R)-3-hydroxyacyl]-alpha-D-glucosamine = a lipid A disaccharide + UDP + H(+)</text>
        <dbReference type="Rhea" id="RHEA:67828"/>
        <dbReference type="ChEBI" id="CHEBI:15378"/>
        <dbReference type="ChEBI" id="CHEBI:58223"/>
        <dbReference type="ChEBI" id="CHEBI:137748"/>
        <dbReference type="ChEBI" id="CHEBI:176338"/>
        <dbReference type="ChEBI" id="CHEBI:176343"/>
        <dbReference type="EC" id="2.4.1.182"/>
    </reaction>
</comment>
<comment type="pathway">
    <text evidence="1">Bacterial outer membrane biogenesis; LPS lipid A biosynthesis.</text>
</comment>
<comment type="similarity">
    <text evidence="1">Belongs to the LpxB family.</text>
</comment>
<feature type="chain" id="PRO_0000255164" description="Lipid-A-disaccharide synthase">
    <location>
        <begin position="1"/>
        <end position="388"/>
    </location>
</feature>
<organism>
    <name type="scientific">Burkholderia mallei (strain ATCC 23344)</name>
    <dbReference type="NCBI Taxonomy" id="243160"/>
    <lineage>
        <taxon>Bacteria</taxon>
        <taxon>Pseudomonadati</taxon>
        <taxon>Pseudomonadota</taxon>
        <taxon>Betaproteobacteria</taxon>
        <taxon>Burkholderiales</taxon>
        <taxon>Burkholderiaceae</taxon>
        <taxon>Burkholderia</taxon>
        <taxon>pseudomallei group</taxon>
    </lineage>
</organism>
<gene>
    <name evidence="1" type="primary">lpxB</name>
    <name type="ordered locus">BMA1542</name>
</gene>
<name>LPXB_BURMA</name>
<reference key="1">
    <citation type="journal article" date="2004" name="Proc. Natl. Acad. Sci. U.S.A.">
        <title>Structural flexibility in the Burkholderia mallei genome.</title>
        <authorList>
            <person name="Nierman W.C."/>
            <person name="DeShazer D."/>
            <person name="Kim H.S."/>
            <person name="Tettelin H."/>
            <person name="Nelson K.E."/>
            <person name="Feldblyum T.V."/>
            <person name="Ulrich R.L."/>
            <person name="Ronning C.M."/>
            <person name="Brinkac L.M."/>
            <person name="Daugherty S.C."/>
            <person name="Davidsen T.D."/>
            <person name="DeBoy R.T."/>
            <person name="Dimitrov G."/>
            <person name="Dodson R.J."/>
            <person name="Durkin A.S."/>
            <person name="Gwinn M.L."/>
            <person name="Haft D.H."/>
            <person name="Khouri H.M."/>
            <person name="Kolonay J.F."/>
            <person name="Madupu R."/>
            <person name="Mohammoud Y."/>
            <person name="Nelson W.C."/>
            <person name="Radune D."/>
            <person name="Romero C.M."/>
            <person name="Sarria S."/>
            <person name="Selengut J."/>
            <person name="Shamblin C."/>
            <person name="Sullivan S.A."/>
            <person name="White O."/>
            <person name="Yu Y."/>
            <person name="Zafar N."/>
            <person name="Zhou L."/>
            <person name="Fraser C.M."/>
        </authorList>
    </citation>
    <scope>NUCLEOTIDE SEQUENCE [LARGE SCALE GENOMIC DNA]</scope>
    <source>
        <strain>ATCC 23344</strain>
    </source>
</reference>
<evidence type="ECO:0000255" key="1">
    <source>
        <dbReference type="HAMAP-Rule" id="MF_00392"/>
    </source>
</evidence>
<dbReference type="EC" id="2.4.1.182" evidence="1"/>
<dbReference type="EMBL" id="CP000010">
    <property type="protein sequence ID" value="AAU47742.1"/>
    <property type="molecule type" value="Genomic_DNA"/>
</dbReference>
<dbReference type="RefSeq" id="WP_004192608.1">
    <property type="nucleotide sequence ID" value="NC_006348.1"/>
</dbReference>
<dbReference type="RefSeq" id="YP_103182.1">
    <property type="nucleotide sequence ID" value="NC_006348.1"/>
</dbReference>
<dbReference type="SMR" id="Q62JD7"/>
<dbReference type="CAZy" id="GT19">
    <property type="family name" value="Glycosyltransferase Family 19"/>
</dbReference>
<dbReference type="GeneID" id="92979268"/>
<dbReference type="KEGG" id="bma:BMA1542"/>
<dbReference type="PATRIC" id="fig|243160.12.peg.1586"/>
<dbReference type="eggNOG" id="COG0763">
    <property type="taxonomic scope" value="Bacteria"/>
</dbReference>
<dbReference type="HOGENOM" id="CLU_036577_3_0_4"/>
<dbReference type="UniPathway" id="UPA00973"/>
<dbReference type="Proteomes" id="UP000006693">
    <property type="component" value="Chromosome 1"/>
</dbReference>
<dbReference type="GO" id="GO:0016020">
    <property type="term" value="C:membrane"/>
    <property type="evidence" value="ECO:0007669"/>
    <property type="project" value="GOC"/>
</dbReference>
<dbReference type="GO" id="GO:0008915">
    <property type="term" value="F:lipid-A-disaccharide synthase activity"/>
    <property type="evidence" value="ECO:0007669"/>
    <property type="project" value="UniProtKB-UniRule"/>
</dbReference>
<dbReference type="GO" id="GO:0005543">
    <property type="term" value="F:phospholipid binding"/>
    <property type="evidence" value="ECO:0007669"/>
    <property type="project" value="TreeGrafter"/>
</dbReference>
<dbReference type="GO" id="GO:0009245">
    <property type="term" value="P:lipid A biosynthetic process"/>
    <property type="evidence" value="ECO:0007669"/>
    <property type="project" value="UniProtKB-UniRule"/>
</dbReference>
<dbReference type="HAMAP" id="MF_00392">
    <property type="entry name" value="LpxB"/>
    <property type="match status" value="1"/>
</dbReference>
<dbReference type="InterPro" id="IPR003835">
    <property type="entry name" value="Glyco_trans_19"/>
</dbReference>
<dbReference type="NCBIfam" id="TIGR00215">
    <property type="entry name" value="lpxB"/>
    <property type="match status" value="1"/>
</dbReference>
<dbReference type="PANTHER" id="PTHR30372">
    <property type="entry name" value="LIPID-A-DISACCHARIDE SYNTHASE"/>
    <property type="match status" value="1"/>
</dbReference>
<dbReference type="PANTHER" id="PTHR30372:SF4">
    <property type="entry name" value="LIPID-A-DISACCHARIDE SYNTHASE, MITOCHONDRIAL-RELATED"/>
    <property type="match status" value="1"/>
</dbReference>
<dbReference type="Pfam" id="PF02684">
    <property type="entry name" value="LpxB"/>
    <property type="match status" value="1"/>
</dbReference>
<dbReference type="SUPFAM" id="SSF53756">
    <property type="entry name" value="UDP-Glycosyltransferase/glycogen phosphorylase"/>
    <property type="match status" value="1"/>
</dbReference>